<feature type="chain" id="PRO_1000075510" description="Peptide chain release factor 1">
    <location>
        <begin position="1"/>
        <end position="360"/>
    </location>
</feature>
<feature type="modified residue" description="N5-methylglutamine" evidence="1">
    <location>
        <position position="234"/>
    </location>
</feature>
<proteinExistence type="inferred from homology"/>
<reference key="1">
    <citation type="journal article" date="2008" name="J. Bacteriol.">
        <title>Genome sequence of the fish pathogen Renibacterium salmoninarum suggests reductive evolution away from an environmental Arthrobacter ancestor.</title>
        <authorList>
            <person name="Wiens G.D."/>
            <person name="Rockey D.D."/>
            <person name="Wu Z."/>
            <person name="Chang J."/>
            <person name="Levy R."/>
            <person name="Crane S."/>
            <person name="Chen D.S."/>
            <person name="Capri G.R."/>
            <person name="Burnett J.R."/>
            <person name="Sudheesh P.S."/>
            <person name="Schipma M.J."/>
            <person name="Burd H."/>
            <person name="Bhattacharyya A."/>
            <person name="Rhodes L.D."/>
            <person name="Kaul R."/>
            <person name="Strom M.S."/>
        </authorList>
    </citation>
    <scope>NUCLEOTIDE SEQUENCE [LARGE SCALE GENOMIC DNA]</scope>
    <source>
        <strain>ATCC 33209 / DSM 20767 / JCM 11484 / NBRC 15589 / NCIMB 2235</strain>
    </source>
</reference>
<keyword id="KW-0963">Cytoplasm</keyword>
<keyword id="KW-0488">Methylation</keyword>
<keyword id="KW-0648">Protein biosynthesis</keyword>
<keyword id="KW-1185">Reference proteome</keyword>
<dbReference type="EMBL" id="CP000910">
    <property type="protein sequence ID" value="ABY23169.1"/>
    <property type="molecule type" value="Genomic_DNA"/>
</dbReference>
<dbReference type="RefSeq" id="WP_012244850.1">
    <property type="nucleotide sequence ID" value="NC_010168.1"/>
</dbReference>
<dbReference type="SMR" id="A9WNB3"/>
<dbReference type="STRING" id="288705.RSal33209_1433"/>
<dbReference type="KEGG" id="rsa:RSal33209_1433"/>
<dbReference type="eggNOG" id="COG0216">
    <property type="taxonomic scope" value="Bacteria"/>
</dbReference>
<dbReference type="HOGENOM" id="CLU_036856_0_1_11"/>
<dbReference type="Proteomes" id="UP000002007">
    <property type="component" value="Chromosome"/>
</dbReference>
<dbReference type="GO" id="GO:0005737">
    <property type="term" value="C:cytoplasm"/>
    <property type="evidence" value="ECO:0007669"/>
    <property type="project" value="UniProtKB-SubCell"/>
</dbReference>
<dbReference type="GO" id="GO:0016149">
    <property type="term" value="F:translation release factor activity, codon specific"/>
    <property type="evidence" value="ECO:0007669"/>
    <property type="project" value="UniProtKB-UniRule"/>
</dbReference>
<dbReference type="FunFam" id="3.30.160.20:FF:000004">
    <property type="entry name" value="Peptide chain release factor 1"/>
    <property type="match status" value="1"/>
</dbReference>
<dbReference type="FunFam" id="3.30.70.1660:FF:000002">
    <property type="entry name" value="Peptide chain release factor 1"/>
    <property type="match status" value="1"/>
</dbReference>
<dbReference type="Gene3D" id="3.30.160.20">
    <property type="match status" value="1"/>
</dbReference>
<dbReference type="Gene3D" id="3.30.70.1660">
    <property type="match status" value="1"/>
</dbReference>
<dbReference type="Gene3D" id="6.10.140.1950">
    <property type="match status" value="1"/>
</dbReference>
<dbReference type="HAMAP" id="MF_00093">
    <property type="entry name" value="Rel_fac_1"/>
    <property type="match status" value="1"/>
</dbReference>
<dbReference type="InterPro" id="IPR005139">
    <property type="entry name" value="PCRF"/>
</dbReference>
<dbReference type="InterPro" id="IPR000352">
    <property type="entry name" value="Pep_chain_release_fac_I"/>
</dbReference>
<dbReference type="InterPro" id="IPR045853">
    <property type="entry name" value="Pep_chain_release_fac_I_sf"/>
</dbReference>
<dbReference type="InterPro" id="IPR050057">
    <property type="entry name" value="Prokaryotic/Mito_RF"/>
</dbReference>
<dbReference type="InterPro" id="IPR004373">
    <property type="entry name" value="RF-1"/>
</dbReference>
<dbReference type="NCBIfam" id="TIGR00019">
    <property type="entry name" value="prfA"/>
    <property type="match status" value="1"/>
</dbReference>
<dbReference type="NCBIfam" id="NF001859">
    <property type="entry name" value="PRK00591.1"/>
    <property type="match status" value="1"/>
</dbReference>
<dbReference type="PANTHER" id="PTHR43804">
    <property type="entry name" value="LD18447P"/>
    <property type="match status" value="1"/>
</dbReference>
<dbReference type="PANTHER" id="PTHR43804:SF7">
    <property type="entry name" value="LD18447P"/>
    <property type="match status" value="1"/>
</dbReference>
<dbReference type="Pfam" id="PF03462">
    <property type="entry name" value="PCRF"/>
    <property type="match status" value="1"/>
</dbReference>
<dbReference type="Pfam" id="PF00472">
    <property type="entry name" value="RF-1"/>
    <property type="match status" value="1"/>
</dbReference>
<dbReference type="SMART" id="SM00937">
    <property type="entry name" value="PCRF"/>
    <property type="match status" value="1"/>
</dbReference>
<dbReference type="SUPFAM" id="SSF75620">
    <property type="entry name" value="Release factor"/>
    <property type="match status" value="1"/>
</dbReference>
<dbReference type="PROSITE" id="PS00745">
    <property type="entry name" value="RF_PROK_I"/>
    <property type="match status" value="1"/>
</dbReference>
<gene>
    <name evidence="1" type="primary">prfA</name>
    <name type="ordered locus">RSal33209_1433</name>
</gene>
<protein>
    <recommendedName>
        <fullName evidence="1">Peptide chain release factor 1</fullName>
        <shortName evidence="1">RF-1</shortName>
    </recommendedName>
</protein>
<comment type="function">
    <text evidence="1">Peptide chain release factor 1 directs the termination of translation in response to the peptide chain termination codons UAG and UAA.</text>
</comment>
<comment type="subcellular location">
    <subcellularLocation>
        <location evidence="1">Cytoplasm</location>
    </subcellularLocation>
</comment>
<comment type="PTM">
    <text evidence="1">Methylated by PrmC. Methylation increases the termination efficiency of RF1.</text>
</comment>
<comment type="similarity">
    <text evidence="1">Belongs to the prokaryotic/mitochondrial release factor family.</text>
</comment>
<evidence type="ECO:0000255" key="1">
    <source>
        <dbReference type="HAMAP-Rule" id="MF_00093"/>
    </source>
</evidence>
<name>RF1_RENSM</name>
<sequence>MFESIQGLLDEHADLQIRLSDPAVHADQSLARKLGRRYAELSTIVEGYHQVQQLSDDLAAAKEMASEDSEFAAEVPVLEEQLAHAQEKLRRLLIPRDPDDGRDVILEVKAGEGGDESALFAADLVRMYSRYAESKGWKIEVISATESDLGGYKDIQIAVKGRSNDPAEGVFAALKFEGGVHRVQRVPVTESQGRIHTSAAGVLVFPEVDEPEEVEISQNDLKIDVYRSSGPGGQSVNTTDSAVRITHFPTGIVVAMQNEKSQLQNREAGMRVLRARILAHQQELIDAENSAVRKSQIRTMDRSERIRTYNFPENRIADHRTGYKSYNLDAVMNGDLGPVIQSAIEMDEQSRLDALSGSSE</sequence>
<organism>
    <name type="scientific">Renibacterium salmoninarum (strain ATCC 33209 / DSM 20767 / JCM 11484 / NBRC 15589 / NCIMB 2235)</name>
    <dbReference type="NCBI Taxonomy" id="288705"/>
    <lineage>
        <taxon>Bacteria</taxon>
        <taxon>Bacillati</taxon>
        <taxon>Actinomycetota</taxon>
        <taxon>Actinomycetes</taxon>
        <taxon>Micrococcales</taxon>
        <taxon>Micrococcaceae</taxon>
        <taxon>Renibacterium</taxon>
    </lineage>
</organism>
<accession>A9WNB3</accession>